<reference key="1">
    <citation type="journal article" date="2005" name="Nucleic Acids Res.">
        <title>Genomic blueprint of Hahella chejuensis, a marine microbe producing an algicidal agent.</title>
        <authorList>
            <person name="Jeong H."/>
            <person name="Yim J.H."/>
            <person name="Lee C."/>
            <person name="Choi S.-H."/>
            <person name="Park Y.K."/>
            <person name="Yoon S.H."/>
            <person name="Hur C.-G."/>
            <person name="Kang H.-Y."/>
            <person name="Kim D."/>
            <person name="Lee H.H."/>
            <person name="Park K.H."/>
            <person name="Park S.-H."/>
            <person name="Park H.-S."/>
            <person name="Lee H.K."/>
            <person name="Oh T.K."/>
            <person name="Kim J.F."/>
        </authorList>
    </citation>
    <scope>NUCLEOTIDE SEQUENCE [LARGE SCALE GENOMIC DNA]</scope>
    <source>
        <strain>KCTC 2396</strain>
    </source>
</reference>
<gene>
    <name type="ordered locus">HCH_01503</name>
</gene>
<keyword id="KW-0378">Hydrolase</keyword>
<keyword id="KW-0479">Metal-binding</keyword>
<keyword id="KW-0546">Nucleotide metabolism</keyword>
<keyword id="KW-1185">Reference proteome</keyword>
<keyword id="KW-0862">Zinc</keyword>
<proteinExistence type="inferred from homology"/>
<feature type="chain" id="PRO_1000017663" description="Adenine deaminase">
    <location>
        <begin position="1"/>
        <end position="334"/>
    </location>
</feature>
<feature type="active site" description="Proton donor" evidence="1">
    <location>
        <position position="197"/>
    </location>
</feature>
<feature type="binding site" evidence="1">
    <location>
        <position position="14"/>
    </location>
    <ligand>
        <name>Zn(2+)</name>
        <dbReference type="ChEBI" id="CHEBI:29105"/>
        <note>catalytic</note>
    </ligand>
</feature>
<feature type="binding site" evidence="1">
    <location>
        <position position="16"/>
    </location>
    <ligand>
        <name>Zn(2+)</name>
        <dbReference type="ChEBI" id="CHEBI:29105"/>
        <note>catalytic</note>
    </ligand>
</feature>
<feature type="binding site" evidence="1">
    <location>
        <position position="194"/>
    </location>
    <ligand>
        <name>Zn(2+)</name>
        <dbReference type="ChEBI" id="CHEBI:29105"/>
        <note>catalytic</note>
    </ligand>
</feature>
<feature type="binding site" evidence="1">
    <location>
        <position position="275"/>
    </location>
    <ligand>
        <name>Zn(2+)</name>
        <dbReference type="ChEBI" id="CHEBI:29105"/>
        <note>catalytic</note>
    </ligand>
</feature>
<feature type="binding site" evidence="1">
    <location>
        <position position="276"/>
    </location>
    <ligand>
        <name>substrate</name>
    </ligand>
</feature>
<feature type="site" description="Important for catalytic activity" evidence="1">
    <location>
        <position position="218"/>
    </location>
</feature>
<sequence>MQDFLKGLPKAELHLHIEGSLEPELMFEIGRRNGVALPFANVEEVRAAYEFNNLQEFLDIYYQGAQVLLHEQDFYDMTFAYLQRCREQNVIHAEMFFDPQTHTDRGVDIGVVIRGLTRAMEDAEIQWGQSSKLILCFLRHLSEDAAIETLRQALPYKQHFVGVGLDSSEVGHPPEKFQRVFEQAQNAGLLTVAHAGEEGPPEYIWQALDLLKVKRIDHGVRCIEDAALMQRLIDEQIPLTVCPLSNIKLCVFDSMSEHNILRLLEKGLKVTVNSDDPAYFGGYMNENFIAMQEALPMSKEQAAQLARNSFEASFLTSEEKARLLARLDQYLQNH</sequence>
<comment type="function">
    <text evidence="1">Catalyzes the hydrolytic deamination of adenine to hypoxanthine. Plays an important role in the purine salvage pathway and in nitrogen catabolism.</text>
</comment>
<comment type="catalytic activity">
    <reaction evidence="1">
        <text>adenine + H2O + H(+) = hypoxanthine + NH4(+)</text>
        <dbReference type="Rhea" id="RHEA:23688"/>
        <dbReference type="ChEBI" id="CHEBI:15377"/>
        <dbReference type="ChEBI" id="CHEBI:15378"/>
        <dbReference type="ChEBI" id="CHEBI:16708"/>
        <dbReference type="ChEBI" id="CHEBI:17368"/>
        <dbReference type="ChEBI" id="CHEBI:28938"/>
        <dbReference type="EC" id="3.5.4.2"/>
    </reaction>
</comment>
<comment type="cofactor">
    <cofactor evidence="1">
        <name>Zn(2+)</name>
        <dbReference type="ChEBI" id="CHEBI:29105"/>
    </cofactor>
    <text evidence="1">Binds 1 zinc ion per subunit.</text>
</comment>
<comment type="similarity">
    <text evidence="1">Belongs to the metallo-dependent hydrolases superfamily. Adenosine and AMP deaminases family. Adenine deaminase type 2 subfamily.</text>
</comment>
<dbReference type="EC" id="3.5.4.2" evidence="1"/>
<dbReference type="EMBL" id="CP000155">
    <property type="protein sequence ID" value="ABC28361.1"/>
    <property type="molecule type" value="Genomic_DNA"/>
</dbReference>
<dbReference type="RefSeq" id="WP_011395434.1">
    <property type="nucleotide sequence ID" value="NC_007645.1"/>
</dbReference>
<dbReference type="SMR" id="Q2SLW3"/>
<dbReference type="STRING" id="349521.HCH_01503"/>
<dbReference type="KEGG" id="hch:HCH_01503"/>
<dbReference type="eggNOG" id="COG1816">
    <property type="taxonomic scope" value="Bacteria"/>
</dbReference>
<dbReference type="HOGENOM" id="CLU_039228_7_0_6"/>
<dbReference type="OrthoDB" id="105475at2"/>
<dbReference type="Proteomes" id="UP000000238">
    <property type="component" value="Chromosome"/>
</dbReference>
<dbReference type="GO" id="GO:0005829">
    <property type="term" value="C:cytosol"/>
    <property type="evidence" value="ECO:0007669"/>
    <property type="project" value="TreeGrafter"/>
</dbReference>
<dbReference type="GO" id="GO:0000034">
    <property type="term" value="F:adenine deaminase activity"/>
    <property type="evidence" value="ECO:0007669"/>
    <property type="project" value="UniProtKB-UniRule"/>
</dbReference>
<dbReference type="GO" id="GO:0008270">
    <property type="term" value="F:zinc ion binding"/>
    <property type="evidence" value="ECO:0007669"/>
    <property type="project" value="UniProtKB-UniRule"/>
</dbReference>
<dbReference type="GO" id="GO:0006146">
    <property type="term" value="P:adenine catabolic process"/>
    <property type="evidence" value="ECO:0007669"/>
    <property type="project" value="UniProtKB-UniRule"/>
</dbReference>
<dbReference type="GO" id="GO:0043103">
    <property type="term" value="P:hypoxanthine salvage"/>
    <property type="evidence" value="ECO:0007669"/>
    <property type="project" value="UniProtKB-UniRule"/>
</dbReference>
<dbReference type="GO" id="GO:0009117">
    <property type="term" value="P:nucleotide metabolic process"/>
    <property type="evidence" value="ECO:0007669"/>
    <property type="project" value="UniProtKB-KW"/>
</dbReference>
<dbReference type="CDD" id="cd01320">
    <property type="entry name" value="ADA"/>
    <property type="match status" value="1"/>
</dbReference>
<dbReference type="FunFam" id="3.20.20.140:FF:000039">
    <property type="entry name" value="Adenine deaminase"/>
    <property type="match status" value="1"/>
</dbReference>
<dbReference type="Gene3D" id="3.20.20.140">
    <property type="entry name" value="Metal-dependent hydrolases"/>
    <property type="match status" value="1"/>
</dbReference>
<dbReference type="HAMAP" id="MF_01962">
    <property type="entry name" value="Adenine_deaminase"/>
    <property type="match status" value="1"/>
</dbReference>
<dbReference type="InterPro" id="IPR001365">
    <property type="entry name" value="A_deaminase_dom"/>
</dbReference>
<dbReference type="InterPro" id="IPR028892">
    <property type="entry name" value="ADE"/>
</dbReference>
<dbReference type="InterPro" id="IPR006330">
    <property type="entry name" value="Ado/ade_deaminase"/>
</dbReference>
<dbReference type="InterPro" id="IPR032466">
    <property type="entry name" value="Metal_Hydrolase"/>
</dbReference>
<dbReference type="NCBIfam" id="TIGR01430">
    <property type="entry name" value="aden_deam"/>
    <property type="match status" value="1"/>
</dbReference>
<dbReference type="NCBIfam" id="NF006850">
    <property type="entry name" value="PRK09358.1-6"/>
    <property type="match status" value="1"/>
</dbReference>
<dbReference type="PANTHER" id="PTHR43114">
    <property type="entry name" value="ADENINE DEAMINASE"/>
    <property type="match status" value="1"/>
</dbReference>
<dbReference type="PANTHER" id="PTHR43114:SF6">
    <property type="entry name" value="ADENINE DEAMINASE"/>
    <property type="match status" value="1"/>
</dbReference>
<dbReference type="Pfam" id="PF00962">
    <property type="entry name" value="A_deaminase"/>
    <property type="match status" value="1"/>
</dbReference>
<dbReference type="SUPFAM" id="SSF51556">
    <property type="entry name" value="Metallo-dependent hydrolases"/>
    <property type="match status" value="1"/>
</dbReference>
<organism>
    <name type="scientific">Hahella chejuensis (strain KCTC 2396)</name>
    <dbReference type="NCBI Taxonomy" id="349521"/>
    <lineage>
        <taxon>Bacteria</taxon>
        <taxon>Pseudomonadati</taxon>
        <taxon>Pseudomonadota</taxon>
        <taxon>Gammaproteobacteria</taxon>
        <taxon>Oceanospirillales</taxon>
        <taxon>Hahellaceae</taxon>
        <taxon>Hahella</taxon>
    </lineage>
</organism>
<protein>
    <recommendedName>
        <fullName evidence="1">Adenine deaminase</fullName>
        <shortName evidence="1">ADE</shortName>
        <ecNumber evidence="1">3.5.4.2</ecNumber>
    </recommendedName>
    <alternativeName>
        <fullName evidence="1">Adenine aminohydrolase</fullName>
        <shortName evidence="1">AAH</shortName>
    </alternativeName>
</protein>
<evidence type="ECO:0000255" key="1">
    <source>
        <dbReference type="HAMAP-Rule" id="MF_01962"/>
    </source>
</evidence>
<name>ADE_HAHCH</name>
<accession>Q2SLW3</accession>